<evidence type="ECO:0000250" key="1">
    <source>
        <dbReference type="UniProtKB" id="Q6XZ79"/>
    </source>
</evidence>
<evidence type="ECO:0000255" key="2">
    <source>
        <dbReference type="RuleBase" id="RU003704"/>
    </source>
</evidence>
<evidence type="ECO:0000312" key="3">
    <source>
        <dbReference type="Araport" id="AT5G51830"/>
    </source>
</evidence>
<evidence type="ECO:0000312" key="4">
    <source>
        <dbReference type="EMBL" id="BAB11252.1"/>
    </source>
</evidence>
<evidence type="ECO:0007744" key="5">
    <source>
    </source>
</evidence>
<keyword id="KW-0007">Acetylation</keyword>
<keyword id="KW-0067">ATP-binding</keyword>
<keyword id="KW-0119">Carbohydrate metabolism</keyword>
<keyword id="KW-0418">Kinase</keyword>
<keyword id="KW-0547">Nucleotide-binding</keyword>
<keyword id="KW-1185">Reference proteome</keyword>
<keyword id="KW-0808">Transferase</keyword>
<gene>
    <name evidence="3" type="ordered locus">At5g51830</name>
    <name evidence="4" type="ORF">MIO24.3</name>
</gene>
<organism>
    <name type="scientific">Arabidopsis thaliana</name>
    <name type="common">Mouse-ear cress</name>
    <dbReference type="NCBI Taxonomy" id="3702"/>
    <lineage>
        <taxon>Eukaryota</taxon>
        <taxon>Viridiplantae</taxon>
        <taxon>Streptophyta</taxon>
        <taxon>Embryophyta</taxon>
        <taxon>Tracheophyta</taxon>
        <taxon>Spermatophyta</taxon>
        <taxon>Magnoliopsida</taxon>
        <taxon>eudicotyledons</taxon>
        <taxon>Gunneridae</taxon>
        <taxon>Pentapetalae</taxon>
        <taxon>rosids</taxon>
        <taxon>malvids</taxon>
        <taxon>Brassicales</taxon>
        <taxon>Brassicaceae</taxon>
        <taxon>Camelineae</taxon>
        <taxon>Arabidopsis</taxon>
    </lineage>
</organism>
<sequence length="343" mass="37028">MGEDAISGNLKNLTIDTRDSETLVVCFGEMLIDFVPTVGGVSLAEAPAFKKAPGGAPANVAVGVSRLGGSSAFIGKVGDDEFGRMLADILRLNNVDNSGMRFDHNARTALAFVTLRGDGEREFLFFRHPSADMLLLESELDKNLIQKAKIFHYGSISLIEEPCRSTQLVAMKIAKAAGSLLSYDPNLRLPLWPSEEAARKEIMSIWNLADVIKISEDEITFLTGGDDPYDDDVVLQKLFHPNLKLLVVSEGPNGCRYYTQEFKGRVGGVKVKPVDTTGAGDAFVSGLLNSLASDLTLLKDEKKLREALLFANACGAITVTERGAIPAMPSMDAVQDLLSSTRS</sequence>
<proteinExistence type="evidence at protein level"/>
<dbReference type="EC" id="2.7.1.4"/>
<dbReference type="EMBL" id="AB010074">
    <property type="protein sequence ID" value="BAB11252.1"/>
    <property type="molecule type" value="Genomic_DNA"/>
</dbReference>
<dbReference type="EMBL" id="CP002688">
    <property type="protein sequence ID" value="AED96132.1"/>
    <property type="molecule type" value="Genomic_DNA"/>
</dbReference>
<dbReference type="EMBL" id="CP002688">
    <property type="protein sequence ID" value="ANM70527.1"/>
    <property type="molecule type" value="Genomic_DNA"/>
</dbReference>
<dbReference type="EMBL" id="AF370289">
    <property type="protein sequence ID" value="AAK44104.1"/>
    <property type="molecule type" value="mRNA"/>
</dbReference>
<dbReference type="EMBL" id="AY063037">
    <property type="protein sequence ID" value="AAL34211.1"/>
    <property type="molecule type" value="mRNA"/>
</dbReference>
<dbReference type="RefSeq" id="NP_001318782.1">
    <property type="nucleotide sequence ID" value="NM_001344963.1"/>
</dbReference>
<dbReference type="RefSeq" id="NP_199996.1">
    <property type="nucleotide sequence ID" value="NM_124562.3"/>
</dbReference>
<dbReference type="SMR" id="Q9FLH8"/>
<dbReference type="FunCoup" id="Q9FLH8">
    <property type="interactions" value="547"/>
</dbReference>
<dbReference type="STRING" id="3702.Q9FLH8"/>
<dbReference type="iPTMnet" id="Q9FLH8"/>
<dbReference type="MetOSite" id="Q9FLH8"/>
<dbReference type="PaxDb" id="3702-AT5G51830.1"/>
<dbReference type="ProteomicsDB" id="232921"/>
<dbReference type="EnsemblPlants" id="AT5G51830.1">
    <property type="protein sequence ID" value="AT5G51830.1"/>
    <property type="gene ID" value="AT5G51830"/>
</dbReference>
<dbReference type="EnsemblPlants" id="AT5G51830.2">
    <property type="protein sequence ID" value="AT5G51830.2"/>
    <property type="gene ID" value="AT5G51830"/>
</dbReference>
<dbReference type="GeneID" id="835258"/>
<dbReference type="Gramene" id="AT5G51830.1">
    <property type="protein sequence ID" value="AT5G51830.1"/>
    <property type="gene ID" value="AT5G51830"/>
</dbReference>
<dbReference type="Gramene" id="AT5G51830.2">
    <property type="protein sequence ID" value="AT5G51830.2"/>
    <property type="gene ID" value="AT5G51830"/>
</dbReference>
<dbReference type="KEGG" id="ath:AT5G51830"/>
<dbReference type="Araport" id="AT5G51830"/>
<dbReference type="TAIR" id="AT5G51830">
    <property type="gene designation" value="FRK1"/>
</dbReference>
<dbReference type="eggNOG" id="KOG2855">
    <property type="taxonomic scope" value="Eukaryota"/>
</dbReference>
<dbReference type="HOGENOM" id="CLU_027634_6_1_1"/>
<dbReference type="InParanoid" id="Q9FLH8"/>
<dbReference type="OMA" id="YSFYVDG"/>
<dbReference type="OrthoDB" id="415590at2759"/>
<dbReference type="PhylomeDB" id="Q9FLH8"/>
<dbReference type="BioCyc" id="ARA:AT5G51830-MONOMER"/>
<dbReference type="BRENDA" id="2.7.1.4">
    <property type="organism ID" value="399"/>
</dbReference>
<dbReference type="UniPathway" id="UPA00152"/>
<dbReference type="PRO" id="PR:Q9FLH8"/>
<dbReference type="Proteomes" id="UP000006548">
    <property type="component" value="Chromosome 5"/>
</dbReference>
<dbReference type="ExpressionAtlas" id="Q9FLH8">
    <property type="expression patterns" value="baseline and differential"/>
</dbReference>
<dbReference type="GO" id="GO:0005829">
    <property type="term" value="C:cytosol"/>
    <property type="evidence" value="ECO:0000314"/>
    <property type="project" value="TAIR"/>
</dbReference>
<dbReference type="GO" id="GO:0005524">
    <property type="term" value="F:ATP binding"/>
    <property type="evidence" value="ECO:0007669"/>
    <property type="project" value="UniProtKB-KW"/>
</dbReference>
<dbReference type="GO" id="GO:0008865">
    <property type="term" value="F:fructokinase activity"/>
    <property type="evidence" value="ECO:0000314"/>
    <property type="project" value="TAIR"/>
</dbReference>
<dbReference type="GO" id="GO:0016051">
    <property type="term" value="P:carbohydrate biosynthetic process"/>
    <property type="evidence" value="ECO:0000316"/>
    <property type="project" value="TAIR"/>
</dbReference>
<dbReference type="GO" id="GO:0006633">
    <property type="term" value="P:fatty acid biosynthetic process"/>
    <property type="evidence" value="ECO:0000316"/>
    <property type="project" value="TAIR"/>
</dbReference>
<dbReference type="GO" id="GO:0006000">
    <property type="term" value="P:fructose metabolic process"/>
    <property type="evidence" value="ECO:0000314"/>
    <property type="project" value="TAIR"/>
</dbReference>
<dbReference type="GO" id="GO:0019252">
    <property type="term" value="P:starch biosynthetic process"/>
    <property type="evidence" value="ECO:0007669"/>
    <property type="project" value="UniProtKB-UniPathway"/>
</dbReference>
<dbReference type="CDD" id="cd01167">
    <property type="entry name" value="bac_FRK"/>
    <property type="match status" value="1"/>
</dbReference>
<dbReference type="FunFam" id="3.40.1190.20:FF:000005">
    <property type="entry name" value="Probable fructokinase-2"/>
    <property type="match status" value="1"/>
</dbReference>
<dbReference type="Gene3D" id="3.40.1190.20">
    <property type="match status" value="1"/>
</dbReference>
<dbReference type="InterPro" id="IPR002173">
    <property type="entry name" value="Carboh/pur_kinase_PfkB_CS"/>
</dbReference>
<dbReference type="InterPro" id="IPR050306">
    <property type="entry name" value="PfkB_Carbo_kinase"/>
</dbReference>
<dbReference type="InterPro" id="IPR011611">
    <property type="entry name" value="PfkB_dom"/>
</dbReference>
<dbReference type="InterPro" id="IPR002139">
    <property type="entry name" value="Ribo/fructo_kinase"/>
</dbReference>
<dbReference type="InterPro" id="IPR029056">
    <property type="entry name" value="Ribokinase-like"/>
</dbReference>
<dbReference type="PANTHER" id="PTHR43085:SF7">
    <property type="entry name" value="FRUCTOKINASE-7-RELATED"/>
    <property type="match status" value="1"/>
</dbReference>
<dbReference type="PANTHER" id="PTHR43085">
    <property type="entry name" value="HEXOKINASE FAMILY MEMBER"/>
    <property type="match status" value="1"/>
</dbReference>
<dbReference type="Pfam" id="PF00294">
    <property type="entry name" value="PfkB"/>
    <property type="match status" value="1"/>
</dbReference>
<dbReference type="PRINTS" id="PR00990">
    <property type="entry name" value="RIBOKINASE"/>
</dbReference>
<dbReference type="SUPFAM" id="SSF53613">
    <property type="entry name" value="Ribokinase-like"/>
    <property type="match status" value="1"/>
</dbReference>
<dbReference type="PROSITE" id="PS00583">
    <property type="entry name" value="PFKB_KINASES_1"/>
    <property type="match status" value="1"/>
</dbReference>
<dbReference type="PROSITE" id="PS00584">
    <property type="entry name" value="PFKB_KINASES_2"/>
    <property type="match status" value="1"/>
</dbReference>
<name>SCRK7_ARATH</name>
<reference key="1">
    <citation type="journal article" date="1998" name="DNA Res.">
        <title>Structural analysis of Arabidopsis thaliana chromosome 5. IV. Sequence features of the regions of 1,456,315 bp covered by nineteen physically assigned P1 and TAC clones.</title>
        <authorList>
            <person name="Sato S."/>
            <person name="Kaneko T."/>
            <person name="Kotani H."/>
            <person name="Nakamura Y."/>
            <person name="Asamizu E."/>
            <person name="Miyajima N."/>
            <person name="Tabata S."/>
        </authorList>
    </citation>
    <scope>NUCLEOTIDE SEQUENCE [LARGE SCALE GENOMIC DNA]</scope>
    <source>
        <strain>cv. Columbia</strain>
    </source>
</reference>
<reference key="2">
    <citation type="journal article" date="2017" name="Plant J.">
        <title>Araport11: a complete reannotation of the Arabidopsis thaliana reference genome.</title>
        <authorList>
            <person name="Cheng C.Y."/>
            <person name="Krishnakumar V."/>
            <person name="Chan A.P."/>
            <person name="Thibaud-Nissen F."/>
            <person name="Schobel S."/>
            <person name="Town C.D."/>
        </authorList>
    </citation>
    <scope>GENOME REANNOTATION</scope>
    <source>
        <strain>cv. Columbia</strain>
    </source>
</reference>
<reference key="3">
    <citation type="journal article" date="2003" name="Science">
        <title>Empirical analysis of transcriptional activity in the Arabidopsis genome.</title>
        <authorList>
            <person name="Yamada K."/>
            <person name="Lim J."/>
            <person name="Dale J.M."/>
            <person name="Chen H."/>
            <person name="Shinn P."/>
            <person name="Palm C.J."/>
            <person name="Southwick A.M."/>
            <person name="Wu H.C."/>
            <person name="Kim C.J."/>
            <person name="Nguyen M."/>
            <person name="Pham P.K."/>
            <person name="Cheuk R.F."/>
            <person name="Karlin-Newmann G."/>
            <person name="Liu S.X."/>
            <person name="Lam B."/>
            <person name="Sakano H."/>
            <person name="Wu T."/>
            <person name="Yu G."/>
            <person name="Miranda M."/>
            <person name="Quach H.L."/>
            <person name="Tripp M."/>
            <person name="Chang C.H."/>
            <person name="Lee J.M."/>
            <person name="Toriumi M.J."/>
            <person name="Chan M.M."/>
            <person name="Tang C.C."/>
            <person name="Onodera C.S."/>
            <person name="Deng J.M."/>
            <person name="Akiyama K."/>
            <person name="Ansari Y."/>
            <person name="Arakawa T."/>
            <person name="Banh J."/>
            <person name="Banno F."/>
            <person name="Bowser L."/>
            <person name="Brooks S.Y."/>
            <person name="Carninci P."/>
            <person name="Chao Q."/>
            <person name="Choy N."/>
            <person name="Enju A."/>
            <person name="Goldsmith A.D."/>
            <person name="Gurjal M."/>
            <person name="Hansen N.F."/>
            <person name="Hayashizaki Y."/>
            <person name="Johnson-Hopson C."/>
            <person name="Hsuan V.W."/>
            <person name="Iida K."/>
            <person name="Karnes M."/>
            <person name="Khan S."/>
            <person name="Koesema E."/>
            <person name="Ishida J."/>
            <person name="Jiang P.X."/>
            <person name="Jones T."/>
            <person name="Kawai J."/>
            <person name="Kamiya A."/>
            <person name="Meyers C."/>
            <person name="Nakajima M."/>
            <person name="Narusaka M."/>
            <person name="Seki M."/>
            <person name="Sakurai T."/>
            <person name="Satou M."/>
            <person name="Tamse R."/>
            <person name="Vaysberg M."/>
            <person name="Wallender E.K."/>
            <person name="Wong C."/>
            <person name="Yamamura Y."/>
            <person name="Yuan S."/>
            <person name="Shinozaki K."/>
            <person name="Davis R.W."/>
            <person name="Theologis A."/>
            <person name="Ecker J.R."/>
        </authorList>
    </citation>
    <scope>NUCLEOTIDE SEQUENCE [LARGE SCALE MRNA]</scope>
    <source>
        <strain>cv. Columbia</strain>
    </source>
</reference>
<reference key="4">
    <citation type="journal article" date="2012" name="Mol. Cell. Proteomics">
        <title>Comparative large-scale characterisation of plant vs. mammal proteins reveals similar and idiosyncratic N-alpha acetylation features.</title>
        <authorList>
            <person name="Bienvenut W.V."/>
            <person name="Sumpton D."/>
            <person name="Martinez A."/>
            <person name="Lilla S."/>
            <person name="Espagne C."/>
            <person name="Meinnel T."/>
            <person name="Giglione C."/>
        </authorList>
    </citation>
    <scope>ACETYLATION [LARGE SCALE ANALYSIS] AT GLY-2</scope>
    <scope>CLEAVAGE OF INITIATOR METHIONINE [LARGE SCALE ANALYSIS]</scope>
    <scope>IDENTIFICATION BY MASS SPECTROMETRY [LARGE SCALE ANALYSIS]</scope>
</reference>
<accession>Q9FLH8</accession>
<protein>
    <recommendedName>
        <fullName>Probable fructokinase-7</fullName>
        <ecNumber>2.7.1.4</ecNumber>
    </recommendedName>
</protein>
<comment type="function">
    <text evidence="1">May play an important role in maintaining the flux of carbon towards starch formation.</text>
</comment>
<comment type="catalytic activity">
    <reaction>
        <text>D-fructose + ATP = D-fructose 6-phosphate + ADP + H(+)</text>
        <dbReference type="Rhea" id="RHEA:16125"/>
        <dbReference type="ChEBI" id="CHEBI:15378"/>
        <dbReference type="ChEBI" id="CHEBI:30616"/>
        <dbReference type="ChEBI" id="CHEBI:37721"/>
        <dbReference type="ChEBI" id="CHEBI:61527"/>
        <dbReference type="ChEBI" id="CHEBI:456216"/>
        <dbReference type="EC" id="2.7.1.4"/>
    </reaction>
</comment>
<comment type="pathway">
    <text>Glycan biosynthesis; starch biosynthesis.</text>
</comment>
<comment type="similarity">
    <text evidence="2">Belongs to the carbohydrate kinase PfkB family.</text>
</comment>
<feature type="initiator methionine" description="Removed" evidence="5">
    <location>
        <position position="1"/>
    </location>
</feature>
<feature type="chain" id="PRO_0000430867" description="Probable fructokinase-7">
    <location>
        <begin position="2"/>
        <end position="343"/>
    </location>
</feature>
<feature type="modified residue" description="N-acetylglycine" evidence="5">
    <location>
        <position position="2"/>
    </location>
</feature>